<reference key="1">
    <citation type="journal article" date="2000" name="DNA Res.">
        <title>Structural analysis of Arabidopsis thaliana chromosome 3. I. Sequence features of the regions of 4,504,864 bp covered by sixty P1 and TAC clones.</title>
        <authorList>
            <person name="Sato S."/>
            <person name="Nakamura Y."/>
            <person name="Kaneko T."/>
            <person name="Katoh T."/>
            <person name="Asamizu E."/>
            <person name="Tabata S."/>
        </authorList>
    </citation>
    <scope>NUCLEOTIDE SEQUENCE [LARGE SCALE GENOMIC DNA]</scope>
    <source>
        <strain>cv. Columbia</strain>
    </source>
</reference>
<reference key="2">
    <citation type="journal article" date="2000" name="DNA Res.">
        <title>Structural analysis of Arabidopsis thaliana chromosome 3. II. Sequence features of the 4,251,695 bp regions covered by 90 P1, TAC and BAC clones.</title>
        <authorList>
            <person name="Kaneko T."/>
            <person name="Katoh T."/>
            <person name="Sato S."/>
            <person name="Nakamura Y."/>
            <person name="Asamizu E."/>
            <person name="Tabata S."/>
        </authorList>
    </citation>
    <scope>NUCLEOTIDE SEQUENCE [LARGE SCALE GENOMIC DNA]</scope>
    <source>
        <strain>cv. Columbia</strain>
    </source>
</reference>
<reference key="3">
    <citation type="journal article" date="2017" name="Plant J.">
        <title>Araport11: a complete reannotation of the Arabidopsis thaliana reference genome.</title>
        <authorList>
            <person name="Cheng C.Y."/>
            <person name="Krishnakumar V."/>
            <person name="Chan A.P."/>
            <person name="Thibaud-Nissen F."/>
            <person name="Schobel S."/>
            <person name="Town C.D."/>
        </authorList>
    </citation>
    <scope>GENOME REANNOTATION</scope>
    <source>
        <strain>cv. Columbia</strain>
    </source>
</reference>
<reference key="4">
    <citation type="submission" date="2004-02" db="EMBL/GenBank/DDBJ databases">
        <title>Arabidopsis ORF clones.</title>
        <authorList>
            <person name="Kim C.J."/>
            <person name="Chen H."/>
            <person name="Cheuk R.F."/>
            <person name="Shinn P."/>
            <person name="Ecker J.R."/>
        </authorList>
    </citation>
    <scope>NUCLEOTIDE SEQUENCE [LARGE SCALE MRNA] OF 639-883</scope>
    <source>
        <strain>cv. Columbia</strain>
    </source>
</reference>
<reference key="5">
    <citation type="journal article" date="2005" name="Plant Physiol.">
        <title>Phylogenomic analysis of the receptor-like proteins of rice and Arabidopsis.</title>
        <authorList>
            <person name="Fritz-Laylin L.K."/>
            <person name="Krishnamurthy N."/>
            <person name="Toer M."/>
            <person name="Sjoelander K.V."/>
            <person name="Jones J.D."/>
        </authorList>
    </citation>
    <scope>GENE FAMILY</scope>
</reference>
<reference key="6">
    <citation type="journal article" date="2008" name="Plant Physiol.">
        <title>A genome-wide functional investigation into the roles of receptor-like proteins in Arabidopsis.</title>
        <authorList>
            <person name="Wang G."/>
            <person name="Ellendorff U."/>
            <person name="Kemp B."/>
            <person name="Mansfield J.W."/>
            <person name="Forsyth A."/>
            <person name="Mitchell K."/>
            <person name="Bastas K."/>
            <person name="Liu C.-M."/>
            <person name="Woods-Toer A."/>
            <person name="Zipfel C."/>
            <person name="de Wit P.J.G.M."/>
            <person name="Jones J.D.G."/>
            <person name="Toer M."/>
            <person name="Thomma B.P.H.J."/>
        </authorList>
    </citation>
    <scope>GENE FAMILY</scope>
    <scope>NOMENCLATURE</scope>
    <source>
        <strain>cv. Columbia</strain>
    </source>
</reference>
<dbReference type="EMBL" id="AB028609">
    <property type="protein sequence ID" value="BAB02902.1"/>
    <property type="molecule type" value="Genomic_DNA"/>
</dbReference>
<dbReference type="EMBL" id="AP000412">
    <property type="protein sequence ID" value="BAB02902.1"/>
    <property type="status" value="JOINED"/>
    <property type="molecule type" value="Genomic_DNA"/>
</dbReference>
<dbReference type="EMBL" id="CP002686">
    <property type="protein sequence ID" value="AEE76963.1"/>
    <property type="status" value="ALT_SEQ"/>
    <property type="molecule type" value="Genomic_DNA"/>
</dbReference>
<dbReference type="EMBL" id="BT010940">
    <property type="protein sequence ID" value="AAR24718.1"/>
    <property type="status" value="ALT_INIT"/>
    <property type="molecule type" value="mRNA"/>
</dbReference>
<dbReference type="EMBL" id="BT011648">
    <property type="protein sequence ID" value="AAS47654.1"/>
    <property type="molecule type" value="mRNA"/>
</dbReference>
<dbReference type="RefSeq" id="NP_566757.2">
    <property type="nucleotide sequence ID" value="NM_113404.3"/>
</dbReference>
<dbReference type="SMR" id="Q9LRW9"/>
<dbReference type="STRING" id="3702.Q9LRW9"/>
<dbReference type="GlyCosmos" id="Q9LRW9">
    <property type="glycosylation" value="17 sites, No reported glycans"/>
</dbReference>
<dbReference type="GlyGen" id="Q9LRW9">
    <property type="glycosylation" value="17 sites"/>
</dbReference>
<dbReference type="PaxDb" id="3702-AT3G24982.1"/>
<dbReference type="ProteomicsDB" id="227990"/>
<dbReference type="GeneID" id="822091"/>
<dbReference type="KEGG" id="ath:AT3G24982"/>
<dbReference type="Araport" id="AT3G24982"/>
<dbReference type="TAIR" id="AT3G24982"/>
<dbReference type="eggNOG" id="KOG0619">
    <property type="taxonomic scope" value="Eukaryota"/>
</dbReference>
<dbReference type="HOGENOM" id="CLU_000288_18_3_1"/>
<dbReference type="InParanoid" id="Q9LRW9"/>
<dbReference type="PhylomeDB" id="Q9LRW9"/>
<dbReference type="PRO" id="PR:Q9LRW9"/>
<dbReference type="Proteomes" id="UP000006548">
    <property type="component" value="Chromosome 3"/>
</dbReference>
<dbReference type="ExpressionAtlas" id="Q9LRW9">
    <property type="expression patterns" value="baseline and differential"/>
</dbReference>
<dbReference type="GO" id="GO:0005886">
    <property type="term" value="C:plasma membrane"/>
    <property type="evidence" value="ECO:0007669"/>
    <property type="project" value="UniProtKB-SubCell"/>
</dbReference>
<dbReference type="FunFam" id="3.80.10.10:FF:000111">
    <property type="entry name" value="LRR receptor-like serine/threonine-protein kinase ERECTA"/>
    <property type="match status" value="1"/>
</dbReference>
<dbReference type="FunFam" id="3.80.10.10:FF:000924">
    <property type="entry name" value="Receptor like protein 39"/>
    <property type="match status" value="1"/>
</dbReference>
<dbReference type="FunFam" id="3.80.10.10:FF:001696">
    <property type="entry name" value="Receptor like protein 39"/>
    <property type="match status" value="1"/>
</dbReference>
<dbReference type="FunFam" id="3.80.10.10:FF:001628">
    <property type="entry name" value="Receptor like protein 41"/>
    <property type="match status" value="1"/>
</dbReference>
<dbReference type="Gene3D" id="3.80.10.10">
    <property type="entry name" value="Ribonuclease Inhibitor"/>
    <property type="match status" value="5"/>
</dbReference>
<dbReference type="InterPro" id="IPR001611">
    <property type="entry name" value="Leu-rich_rpt"/>
</dbReference>
<dbReference type="InterPro" id="IPR003591">
    <property type="entry name" value="Leu-rich_rpt_typical-subtyp"/>
</dbReference>
<dbReference type="InterPro" id="IPR032675">
    <property type="entry name" value="LRR_dom_sf"/>
</dbReference>
<dbReference type="InterPro" id="IPR055414">
    <property type="entry name" value="LRR_R13L4/SHOC2-like"/>
</dbReference>
<dbReference type="InterPro" id="IPR052595">
    <property type="entry name" value="LRRC69/RLP"/>
</dbReference>
<dbReference type="PANTHER" id="PTHR48057">
    <property type="entry name" value="LEUCINE-RICH REPEAT SERINE/THREONINE-PROTEIN KINASE 1"/>
    <property type="match status" value="1"/>
</dbReference>
<dbReference type="PANTHER" id="PTHR48057:SF17">
    <property type="entry name" value="LRR RECEPTOR-LIKE SERINE_THREONINE-PROTEIN KINASE FLS2"/>
    <property type="match status" value="1"/>
</dbReference>
<dbReference type="Pfam" id="PF00560">
    <property type="entry name" value="LRR_1"/>
    <property type="match status" value="3"/>
</dbReference>
<dbReference type="Pfam" id="PF23598">
    <property type="entry name" value="LRR_14"/>
    <property type="match status" value="1"/>
</dbReference>
<dbReference type="Pfam" id="PF13855">
    <property type="entry name" value="LRR_8"/>
    <property type="match status" value="2"/>
</dbReference>
<dbReference type="SMART" id="SM00369">
    <property type="entry name" value="LRR_TYP"/>
    <property type="match status" value="8"/>
</dbReference>
<dbReference type="SUPFAM" id="SSF52058">
    <property type="entry name" value="L domain-like"/>
    <property type="match status" value="2"/>
</dbReference>
<feature type="signal peptide" evidence="1">
    <location>
        <begin position="1"/>
        <end position="21"/>
    </location>
</feature>
<feature type="chain" id="PRO_5004329261" description="Receptor-like protein 40">
    <location>
        <begin position="22"/>
        <end position="883"/>
    </location>
</feature>
<feature type="topological domain" description="Extracellular" evidence="1">
    <location>
        <begin position="22"/>
        <end position="846"/>
    </location>
</feature>
<feature type="transmembrane region" description="Helical" evidence="1">
    <location>
        <begin position="847"/>
        <end position="867"/>
    </location>
</feature>
<feature type="topological domain" description="Cytoplasmic" evidence="1">
    <location>
        <begin position="868"/>
        <end position="883"/>
    </location>
</feature>
<feature type="repeat" description="LRR 1" evidence="1">
    <location>
        <begin position="97"/>
        <end position="121"/>
    </location>
</feature>
<feature type="repeat" description="LRR 2" evidence="1">
    <location>
        <begin position="122"/>
        <end position="143"/>
    </location>
</feature>
<feature type="repeat" description="LRR 3" evidence="1">
    <location>
        <begin position="146"/>
        <end position="169"/>
    </location>
</feature>
<feature type="repeat" description="LRR 4" evidence="1">
    <location>
        <begin position="170"/>
        <end position="195"/>
    </location>
</feature>
<feature type="repeat" description="LRR 5" evidence="1">
    <location>
        <begin position="197"/>
        <end position="219"/>
    </location>
</feature>
<feature type="repeat" description="LRR 6" evidence="1">
    <location>
        <begin position="220"/>
        <end position="244"/>
    </location>
</feature>
<feature type="repeat" description="LRR 7" evidence="1">
    <location>
        <begin position="246"/>
        <end position="267"/>
    </location>
</feature>
<feature type="repeat" description="LRR 8" evidence="1">
    <location>
        <begin position="268"/>
        <end position="291"/>
    </location>
</feature>
<feature type="repeat" description="LRR 9" evidence="1">
    <location>
        <begin position="293"/>
        <end position="316"/>
    </location>
</feature>
<feature type="repeat" description="LRR 10" evidence="1">
    <location>
        <begin position="317"/>
        <end position="340"/>
    </location>
</feature>
<feature type="repeat" description="LRR 11" evidence="1">
    <location>
        <begin position="342"/>
        <end position="364"/>
    </location>
</feature>
<feature type="repeat" description="LRR 12" evidence="1">
    <location>
        <begin position="365"/>
        <end position="390"/>
    </location>
</feature>
<feature type="repeat" description="LRR 13" evidence="1">
    <location>
        <begin position="391"/>
        <end position="412"/>
    </location>
</feature>
<feature type="repeat" description="LRR 14" evidence="1">
    <location>
        <begin position="413"/>
        <end position="437"/>
    </location>
</feature>
<feature type="repeat" description="LRR 15" evidence="1">
    <location>
        <begin position="439"/>
        <end position="462"/>
    </location>
</feature>
<feature type="repeat" description="LRR 16" evidence="1">
    <location>
        <begin position="463"/>
        <end position="486"/>
    </location>
</feature>
<feature type="repeat" description="LRR 17; degenerate" evidence="4">
    <location>
        <begin position="487"/>
        <end position="506"/>
    </location>
</feature>
<feature type="repeat" description="LRR 18" evidence="1">
    <location>
        <begin position="507"/>
        <end position="528"/>
    </location>
</feature>
<feature type="repeat" description="LRR 19" evidence="1">
    <location>
        <begin position="529"/>
        <end position="552"/>
    </location>
</feature>
<feature type="repeat" description="LRR 20" evidence="1">
    <location>
        <begin position="554"/>
        <end position="576"/>
    </location>
</feature>
<feature type="repeat" description="LRR 21" evidence="1">
    <location>
        <begin position="578"/>
        <end position="600"/>
    </location>
</feature>
<feature type="repeat" description="LRR 22" evidence="1">
    <location>
        <begin position="601"/>
        <end position="624"/>
    </location>
</feature>
<feature type="repeat" description="LRR 23" evidence="1">
    <location>
        <begin position="627"/>
        <end position="651"/>
    </location>
</feature>
<feature type="repeat" description="LRR 24" evidence="1">
    <location>
        <begin position="701"/>
        <end position="724"/>
    </location>
</feature>
<feature type="repeat" description="LRR 25" evidence="1">
    <location>
        <begin position="725"/>
        <end position="747"/>
    </location>
</feature>
<feature type="repeat" description="LRR 26" evidence="1">
    <location>
        <begin position="748"/>
        <end position="772"/>
    </location>
</feature>
<feature type="repeat" description="LRR 27" evidence="1">
    <location>
        <begin position="774"/>
        <end position="797"/>
    </location>
</feature>
<feature type="glycosylation site" description="N-linked (GlcNAc...) asparagine" evidence="2">
    <location>
        <position position="58"/>
    </location>
</feature>
<feature type="glycosylation site" description="N-linked (GlcNAc...) asparagine" evidence="2">
    <location>
        <position position="91"/>
    </location>
</feature>
<feature type="glycosylation site" description="N-linked (GlcNAc...) asparagine" evidence="2">
    <location>
        <position position="109"/>
    </location>
</feature>
<feature type="glycosylation site" description="N-linked (GlcNAc...) asparagine" evidence="2">
    <location>
        <position position="145"/>
    </location>
</feature>
<feature type="glycosylation site" description="N-linked (GlcNAc...) asparagine" evidence="2">
    <location>
        <position position="189"/>
    </location>
</feature>
<feature type="glycosylation site" description="N-linked (GlcNAc...) asparagine" evidence="2">
    <location>
        <position position="207"/>
    </location>
</feature>
<feature type="glycosylation site" description="N-linked (GlcNAc...) asparagine" evidence="2">
    <location>
        <position position="243"/>
    </location>
</feature>
<feature type="glycosylation site" description="N-linked (GlcNAc...) asparagine" evidence="2">
    <location>
        <position position="266"/>
    </location>
</feature>
<feature type="glycosylation site" description="N-linked (GlcNAc...) asparagine" evidence="2">
    <location>
        <position position="305"/>
    </location>
</feature>
<feature type="glycosylation site" description="N-linked (GlcNAc...) asparagine" evidence="2">
    <location>
        <position position="312"/>
    </location>
</feature>
<feature type="glycosylation site" description="N-linked (GlcNAc...) asparagine" evidence="2">
    <location>
        <position position="352"/>
    </location>
</feature>
<feature type="glycosylation site" description="N-linked (GlcNAc...) asparagine" evidence="2">
    <location>
        <position position="462"/>
    </location>
</feature>
<feature type="glycosylation site" description="N-linked (GlcNAc...) asparagine" evidence="2">
    <location>
        <position position="506"/>
    </location>
</feature>
<feature type="glycosylation site" description="N-linked (GlcNAc...) asparagine" evidence="2">
    <location>
        <position position="519"/>
    </location>
</feature>
<feature type="glycosylation site" description="N-linked (GlcNAc...) asparagine" evidence="2">
    <location>
        <position position="575"/>
    </location>
</feature>
<feature type="glycosylation site" description="N-linked (GlcNAc...) asparagine" evidence="2">
    <location>
        <position position="731"/>
    </location>
</feature>
<feature type="glycosylation site" description="N-linked (GlcNAc...) asparagine" evidence="2">
    <location>
        <position position="779"/>
    </location>
</feature>
<protein>
    <recommendedName>
        <fullName evidence="3">Receptor-like protein 40</fullName>
        <shortName evidence="3">AtRLP40</shortName>
    </recommendedName>
</protein>
<proteinExistence type="evidence at transcript level"/>
<name>RLP40_ARATH</name>
<comment type="subcellular location">
    <subcellularLocation>
        <location evidence="4">Cell membrane</location>
        <topology evidence="4">Single-pass type I membrane protein</topology>
    </subcellularLocation>
</comment>
<comment type="similarity">
    <text evidence="4">Belongs to the RLP family.</text>
</comment>
<comment type="sequence caution" evidence="4">
    <conflict type="erroneous initiation">
        <sequence resource="EMBL-CDS" id="AAR24718"/>
    </conflict>
    <text>Truncated N-terminus.</text>
</comment>
<comment type="sequence caution" evidence="4">
    <conflict type="erroneous gene model prediction">
        <sequence resource="EMBL-CDS" id="AEE76963"/>
    </conflict>
</comment>
<organism>
    <name type="scientific">Arabidopsis thaliana</name>
    <name type="common">Mouse-ear cress</name>
    <dbReference type="NCBI Taxonomy" id="3702"/>
    <lineage>
        <taxon>Eukaryota</taxon>
        <taxon>Viridiplantae</taxon>
        <taxon>Streptophyta</taxon>
        <taxon>Embryophyta</taxon>
        <taxon>Tracheophyta</taxon>
        <taxon>Spermatophyta</taxon>
        <taxon>Magnoliopsida</taxon>
        <taxon>eudicotyledons</taxon>
        <taxon>Gunneridae</taxon>
        <taxon>Pentapetalae</taxon>
        <taxon>rosids</taxon>
        <taxon>malvids</taxon>
        <taxon>Brassicales</taxon>
        <taxon>Brassicaceae</taxon>
        <taxon>Camelineae</taxon>
        <taxon>Arabidopsis</taxon>
    </lineage>
</organism>
<accession>Q9LRW9</accession>
<accession>F4J7T9</accession>
<accession>Q6NMK9</accession>
<gene>
    <name evidence="3" type="primary">RLP40</name>
    <name evidence="5" type="ordered locus">At3g24982</name>
    <name evidence="6" type="ORF">K7P8.21</name>
</gene>
<sequence>MSELLFSLNFLLLLLLSCVSPSSFFTFNNPVVGLGACGPHQIQAFTQFKNEFDTRACNHSDPWNGVWCDDSTGAVTMLQLRACLSGTLKPNSSLFQFHHLRSLLLPHNNFTSSSISSKFGMLNNLEVLSLSSSGFLAQVPFSFSNLSMLSALVLSNNDLTGSLSFARNLRKLRVLDVSYNHFSGILNPNSSLFELHHIIYLNLRYNNFTSSSLPYEFGNLNKLEVLDVSSNSFFGQVPPTISNLTQLTELYLPLNHFTGSLPLVQNLTKLSILHLFGNHFSGTIPSSLFTMPFLSYLSLKGNNLNGSIEVPNSSSSSRLESLHLGENHFEGKILEPISKLINLKELDLSFLNTSYPIDLSLFSSLKSLLLLDLSGDWISKASLTLDSYIPSTLEVLRLEHCDISDFPNVFKTLHNLEYIALSNNRISGKFPEWLWSLPRLSSVFITDNLLTGFEGSSEVLVNSSVQILSLDTNSLEGALPHLPLSINYFSAIDNRFGGDIPLSICNRSSLDVLDLSYNNFTGPIPPCLSNLLYLKLRKNNLEGSIPDKYYEDTPLRSLDVGYNRLTGKLPRSLINCSALQFLSVDHNGIKDTFPFSLKALPKLQVLLLSSNKFYGPLSPPNEGPLGFPELRILEIAGNKLTGSLSSDFFVNWKASSHTMNEDLGLYMVYGKVIFGNYHLTYYETIDLRYKGLSMEQRNVLTSSATIDFSGNRLEGEIPESIGLLKALIALNLSNNAFTGHIPLSFANLKKMESLDLSSNQLSGTIPNGLRTLSFLAYVNVSHNQLIGEIPQGTQITGQPKSSFEGNAGLCGFPLQESCFGTNTPPAQHPKEQEEEEEDEQVLNWKAVAIGYGIGVLLGLAIAQLISLYKPKWLASLVIKSRNC</sequence>
<evidence type="ECO:0000255" key="1"/>
<evidence type="ECO:0000255" key="2">
    <source>
        <dbReference type="PROSITE-ProRule" id="PRU00498"/>
    </source>
</evidence>
<evidence type="ECO:0000303" key="3">
    <source>
    </source>
</evidence>
<evidence type="ECO:0000305" key="4"/>
<evidence type="ECO:0000312" key="5">
    <source>
        <dbReference type="Araport" id="AT3G24982"/>
    </source>
</evidence>
<evidence type="ECO:0000312" key="6">
    <source>
        <dbReference type="EMBL" id="BAB02902.1"/>
    </source>
</evidence>
<keyword id="KW-1003">Cell membrane</keyword>
<keyword id="KW-0325">Glycoprotein</keyword>
<keyword id="KW-0433">Leucine-rich repeat</keyword>
<keyword id="KW-0472">Membrane</keyword>
<keyword id="KW-0675">Receptor</keyword>
<keyword id="KW-1185">Reference proteome</keyword>
<keyword id="KW-0677">Repeat</keyword>
<keyword id="KW-0732">Signal</keyword>
<keyword id="KW-0812">Transmembrane</keyword>
<keyword id="KW-1133">Transmembrane helix</keyword>